<gene>
    <name evidence="1" type="primary">tgt</name>
    <name type="ordered locus">TDE_0438</name>
</gene>
<proteinExistence type="inferred from homology"/>
<name>TGT_TREDE</name>
<comment type="function">
    <text evidence="1">Catalyzes the base-exchange of a guanine (G) residue with the queuine precursor 7-aminomethyl-7-deazaguanine (PreQ1) at position 34 (anticodon wobble position) in tRNAs with GU(N) anticodons (tRNA-Asp, -Asn, -His and -Tyr). Catalysis occurs through a double-displacement mechanism. The nucleophile active site attacks the C1' of nucleotide 34 to detach the guanine base from the RNA, forming a covalent enzyme-RNA intermediate. The proton acceptor active site deprotonates the incoming PreQ1, allowing a nucleophilic attack on the C1' of the ribose to form the product. After dissociation, two additional enzymatic reactions on the tRNA convert PreQ1 to queuine (Q), resulting in the hypermodified nucleoside queuosine (7-(((4,5-cis-dihydroxy-2-cyclopenten-1-yl)amino)methyl)-7-deazaguanosine).</text>
</comment>
<comment type="catalytic activity">
    <reaction evidence="1">
        <text>7-aminomethyl-7-carbaguanine + guanosine(34) in tRNA = 7-aminomethyl-7-carbaguanosine(34) in tRNA + guanine</text>
        <dbReference type="Rhea" id="RHEA:24104"/>
        <dbReference type="Rhea" id="RHEA-COMP:10341"/>
        <dbReference type="Rhea" id="RHEA-COMP:10342"/>
        <dbReference type="ChEBI" id="CHEBI:16235"/>
        <dbReference type="ChEBI" id="CHEBI:58703"/>
        <dbReference type="ChEBI" id="CHEBI:74269"/>
        <dbReference type="ChEBI" id="CHEBI:82833"/>
        <dbReference type="EC" id="2.4.2.29"/>
    </reaction>
</comment>
<comment type="cofactor">
    <cofactor evidence="1">
        <name>Zn(2+)</name>
        <dbReference type="ChEBI" id="CHEBI:29105"/>
    </cofactor>
    <text evidence="1">Binds 1 zinc ion per subunit.</text>
</comment>
<comment type="pathway">
    <text evidence="1">tRNA modification; tRNA-queuosine biosynthesis.</text>
</comment>
<comment type="subunit">
    <text evidence="1">Homodimer. Within each dimer, one monomer is responsible for RNA recognition and catalysis, while the other monomer binds to the replacement base PreQ1.</text>
</comment>
<comment type="similarity">
    <text evidence="1">Belongs to the queuine tRNA-ribosyltransferase family.</text>
</comment>
<sequence>MKEKKEIFTLLHQDAASPARTGVLELPHGKVLTPAFMPVGTAATVKAMTKDDLDEIGFEIILANTYHLFLRPGIEVIKAAGGLHGFSDWKKNFLTDSGGFQVFSLSQLRKITEEGVKFQSHIDGSRQFLSPEIAVELQTGFNSDIQMQLDICSSFGISKTQTLADLKITMNWLDRAFAAWHNTPHEYDGALFPIVQGGFFEDLRLQSLEAILKHEPRGIAIGGLSIGEPKDLYQEYLSFTAKHIPKNKPLYVMGIGTPDYILEAVKNGVDIFDCVLPSRNARNGNLFTHEGAISIKRKEYEFDFNPIDSQCKCKVCRQYTRAYLRHLFRTKEILYSMLATYHNLAFLYSMVQDIREAIQNDSFNDYYKNFLKKYENRLD</sequence>
<protein>
    <recommendedName>
        <fullName evidence="1">Queuine tRNA-ribosyltransferase</fullName>
        <ecNumber evidence="1">2.4.2.29</ecNumber>
    </recommendedName>
    <alternativeName>
        <fullName evidence="1">Guanine insertion enzyme</fullName>
    </alternativeName>
    <alternativeName>
        <fullName evidence="1">tRNA-guanine transglycosylase</fullName>
    </alternativeName>
</protein>
<accession>Q73QK5</accession>
<reference key="1">
    <citation type="journal article" date="2004" name="Proc. Natl. Acad. Sci. U.S.A.">
        <title>Comparison of the genome of the oral pathogen Treponema denticola with other spirochete genomes.</title>
        <authorList>
            <person name="Seshadri R."/>
            <person name="Myers G.S.A."/>
            <person name="Tettelin H."/>
            <person name="Eisen J.A."/>
            <person name="Heidelberg J.F."/>
            <person name="Dodson R.J."/>
            <person name="Davidsen T.M."/>
            <person name="DeBoy R.T."/>
            <person name="Fouts D.E."/>
            <person name="Haft D.H."/>
            <person name="Selengut J."/>
            <person name="Ren Q."/>
            <person name="Brinkac L.M."/>
            <person name="Madupu R."/>
            <person name="Kolonay J.F."/>
            <person name="Durkin S.A."/>
            <person name="Daugherty S.C."/>
            <person name="Shetty J."/>
            <person name="Shvartsbeyn A."/>
            <person name="Gebregeorgis E."/>
            <person name="Geer K."/>
            <person name="Tsegaye G."/>
            <person name="Malek J.A."/>
            <person name="Ayodeji B."/>
            <person name="Shatsman S."/>
            <person name="McLeod M.P."/>
            <person name="Smajs D."/>
            <person name="Howell J.K."/>
            <person name="Pal S."/>
            <person name="Amin A."/>
            <person name="Vashisth P."/>
            <person name="McNeill T.Z."/>
            <person name="Xiang Q."/>
            <person name="Sodergren E."/>
            <person name="Baca E."/>
            <person name="Weinstock G.M."/>
            <person name="Norris S.J."/>
            <person name="Fraser C.M."/>
            <person name="Paulsen I.T."/>
        </authorList>
    </citation>
    <scope>NUCLEOTIDE SEQUENCE [LARGE SCALE GENOMIC DNA]</scope>
    <source>
        <strain>ATCC 35405 / DSM 14222 / CIP 103919 / JCM 8153 / KCTC 15104</strain>
    </source>
</reference>
<keyword id="KW-0328">Glycosyltransferase</keyword>
<keyword id="KW-0479">Metal-binding</keyword>
<keyword id="KW-0671">Queuosine biosynthesis</keyword>
<keyword id="KW-1185">Reference proteome</keyword>
<keyword id="KW-0808">Transferase</keyword>
<keyword id="KW-0819">tRNA processing</keyword>
<keyword id="KW-0862">Zinc</keyword>
<organism>
    <name type="scientific">Treponema denticola (strain ATCC 35405 / DSM 14222 / CIP 103919 / JCM 8153 / KCTC 15104)</name>
    <dbReference type="NCBI Taxonomy" id="243275"/>
    <lineage>
        <taxon>Bacteria</taxon>
        <taxon>Pseudomonadati</taxon>
        <taxon>Spirochaetota</taxon>
        <taxon>Spirochaetia</taxon>
        <taxon>Spirochaetales</taxon>
        <taxon>Treponemataceae</taxon>
        <taxon>Treponema</taxon>
    </lineage>
</organism>
<dbReference type="EC" id="2.4.2.29" evidence="1"/>
<dbReference type="EMBL" id="AE017226">
    <property type="protein sequence ID" value="AAS10933.1"/>
    <property type="molecule type" value="Genomic_DNA"/>
</dbReference>
<dbReference type="RefSeq" id="NP_971052.1">
    <property type="nucleotide sequence ID" value="NC_002967.9"/>
</dbReference>
<dbReference type="RefSeq" id="WP_002681512.1">
    <property type="nucleotide sequence ID" value="NC_002967.9"/>
</dbReference>
<dbReference type="SMR" id="Q73QK5"/>
<dbReference type="STRING" id="243275.TDE_0438"/>
<dbReference type="PaxDb" id="243275-TDE_0438"/>
<dbReference type="GeneID" id="2740584"/>
<dbReference type="KEGG" id="tde:TDE_0438"/>
<dbReference type="PATRIC" id="fig|243275.7.peg.425"/>
<dbReference type="eggNOG" id="COG0343">
    <property type="taxonomic scope" value="Bacteria"/>
</dbReference>
<dbReference type="HOGENOM" id="CLU_022060_0_1_12"/>
<dbReference type="OrthoDB" id="9805417at2"/>
<dbReference type="UniPathway" id="UPA00392"/>
<dbReference type="Proteomes" id="UP000008212">
    <property type="component" value="Chromosome"/>
</dbReference>
<dbReference type="GO" id="GO:0005829">
    <property type="term" value="C:cytosol"/>
    <property type="evidence" value="ECO:0007669"/>
    <property type="project" value="TreeGrafter"/>
</dbReference>
<dbReference type="GO" id="GO:0046872">
    <property type="term" value="F:metal ion binding"/>
    <property type="evidence" value="ECO:0007669"/>
    <property type="project" value="UniProtKB-KW"/>
</dbReference>
<dbReference type="GO" id="GO:0008479">
    <property type="term" value="F:tRNA-guanosine(34) queuine transglycosylase activity"/>
    <property type="evidence" value="ECO:0007669"/>
    <property type="project" value="UniProtKB-UniRule"/>
</dbReference>
<dbReference type="GO" id="GO:0008616">
    <property type="term" value="P:queuosine biosynthetic process"/>
    <property type="evidence" value="ECO:0007669"/>
    <property type="project" value="UniProtKB-UniRule"/>
</dbReference>
<dbReference type="GO" id="GO:0002099">
    <property type="term" value="P:tRNA wobble guanine modification"/>
    <property type="evidence" value="ECO:0007669"/>
    <property type="project" value="TreeGrafter"/>
</dbReference>
<dbReference type="GO" id="GO:0101030">
    <property type="term" value="P:tRNA-guanine transglycosylation"/>
    <property type="evidence" value="ECO:0007669"/>
    <property type="project" value="InterPro"/>
</dbReference>
<dbReference type="Gene3D" id="3.20.20.105">
    <property type="entry name" value="Queuine tRNA-ribosyltransferase-like"/>
    <property type="match status" value="1"/>
</dbReference>
<dbReference type="HAMAP" id="MF_00168">
    <property type="entry name" value="Q_tRNA_Tgt"/>
    <property type="match status" value="1"/>
</dbReference>
<dbReference type="InterPro" id="IPR050076">
    <property type="entry name" value="ArchSynthase1/Queuine_TRR"/>
</dbReference>
<dbReference type="InterPro" id="IPR004803">
    <property type="entry name" value="TGT"/>
</dbReference>
<dbReference type="InterPro" id="IPR036511">
    <property type="entry name" value="TGT-like_sf"/>
</dbReference>
<dbReference type="InterPro" id="IPR002616">
    <property type="entry name" value="tRNA_ribo_trans-like"/>
</dbReference>
<dbReference type="NCBIfam" id="TIGR00430">
    <property type="entry name" value="Q_tRNA_tgt"/>
    <property type="match status" value="1"/>
</dbReference>
<dbReference type="NCBIfam" id="TIGR00449">
    <property type="entry name" value="tgt_general"/>
    <property type="match status" value="1"/>
</dbReference>
<dbReference type="PANTHER" id="PTHR46499">
    <property type="entry name" value="QUEUINE TRNA-RIBOSYLTRANSFERASE"/>
    <property type="match status" value="1"/>
</dbReference>
<dbReference type="PANTHER" id="PTHR46499:SF1">
    <property type="entry name" value="QUEUINE TRNA-RIBOSYLTRANSFERASE"/>
    <property type="match status" value="1"/>
</dbReference>
<dbReference type="Pfam" id="PF01702">
    <property type="entry name" value="TGT"/>
    <property type="match status" value="1"/>
</dbReference>
<dbReference type="SUPFAM" id="SSF51713">
    <property type="entry name" value="tRNA-guanine transglycosylase"/>
    <property type="match status" value="1"/>
</dbReference>
<evidence type="ECO:0000255" key="1">
    <source>
        <dbReference type="HAMAP-Rule" id="MF_00168"/>
    </source>
</evidence>
<feature type="chain" id="PRO_0000135549" description="Queuine tRNA-ribosyltransferase">
    <location>
        <begin position="1"/>
        <end position="379"/>
    </location>
</feature>
<feature type="region of interest" description="RNA binding" evidence="1">
    <location>
        <begin position="254"/>
        <end position="260"/>
    </location>
</feature>
<feature type="active site" description="Proton acceptor" evidence="1">
    <location>
        <position position="96"/>
    </location>
</feature>
<feature type="active site" description="Nucleophile" evidence="1">
    <location>
        <position position="273"/>
    </location>
</feature>
<feature type="binding site" evidence="1">
    <location>
        <begin position="96"/>
        <end position="100"/>
    </location>
    <ligand>
        <name>substrate</name>
    </ligand>
</feature>
<feature type="binding site" evidence="1">
    <location>
        <position position="150"/>
    </location>
    <ligand>
        <name>substrate</name>
    </ligand>
</feature>
<feature type="binding site" evidence="1">
    <location>
        <position position="196"/>
    </location>
    <ligand>
        <name>substrate</name>
    </ligand>
</feature>
<feature type="binding site" evidence="1">
    <location>
        <position position="223"/>
    </location>
    <ligand>
        <name>substrate</name>
    </ligand>
</feature>
<feature type="binding site" evidence="1">
    <location>
        <position position="311"/>
    </location>
    <ligand>
        <name>Zn(2+)</name>
        <dbReference type="ChEBI" id="CHEBI:29105"/>
    </ligand>
</feature>
<feature type="binding site" evidence="1">
    <location>
        <position position="313"/>
    </location>
    <ligand>
        <name>Zn(2+)</name>
        <dbReference type="ChEBI" id="CHEBI:29105"/>
    </ligand>
</feature>
<feature type="binding site" evidence="1">
    <location>
        <position position="316"/>
    </location>
    <ligand>
        <name>Zn(2+)</name>
        <dbReference type="ChEBI" id="CHEBI:29105"/>
    </ligand>
</feature>
<feature type="binding site" evidence="1">
    <location>
        <position position="342"/>
    </location>
    <ligand>
        <name>Zn(2+)</name>
        <dbReference type="ChEBI" id="CHEBI:29105"/>
    </ligand>
</feature>